<organism>
    <name type="scientific">Helicobacter pylori (strain G27)</name>
    <dbReference type="NCBI Taxonomy" id="563041"/>
    <lineage>
        <taxon>Bacteria</taxon>
        <taxon>Pseudomonadati</taxon>
        <taxon>Campylobacterota</taxon>
        <taxon>Epsilonproteobacteria</taxon>
        <taxon>Campylobacterales</taxon>
        <taxon>Helicobacteraceae</taxon>
        <taxon>Helicobacter</taxon>
    </lineage>
</organism>
<evidence type="ECO:0000255" key="1">
    <source>
        <dbReference type="HAMAP-Rule" id="MF_00129"/>
    </source>
</evidence>
<protein>
    <recommendedName>
        <fullName evidence="1">tRNA uridine 5-carboxymethylaminomethyl modification enzyme MnmG</fullName>
    </recommendedName>
    <alternativeName>
        <fullName evidence="1">Glucose-inhibited division protein A</fullName>
    </alternativeName>
</protein>
<name>MNMG_HELPG</name>
<gene>
    <name evidence="1" type="primary">mnmG</name>
    <name evidence="1" type="synonym">gidA</name>
    <name type="ordered locus">HPG27_195</name>
</gene>
<dbReference type="EMBL" id="CP001173">
    <property type="protein sequence ID" value="ACI26962.1"/>
    <property type="molecule type" value="Genomic_DNA"/>
</dbReference>
<dbReference type="RefSeq" id="WP_000238129.1">
    <property type="nucleotide sequence ID" value="NC_011333.1"/>
</dbReference>
<dbReference type="SMR" id="B5Z9Y2"/>
<dbReference type="KEGG" id="hpg:HPG27_195"/>
<dbReference type="HOGENOM" id="CLU_007831_2_2_7"/>
<dbReference type="Proteomes" id="UP000001735">
    <property type="component" value="Chromosome"/>
</dbReference>
<dbReference type="GO" id="GO:0005829">
    <property type="term" value="C:cytosol"/>
    <property type="evidence" value="ECO:0007669"/>
    <property type="project" value="TreeGrafter"/>
</dbReference>
<dbReference type="GO" id="GO:0050660">
    <property type="term" value="F:flavin adenine dinucleotide binding"/>
    <property type="evidence" value="ECO:0007669"/>
    <property type="project" value="UniProtKB-UniRule"/>
</dbReference>
<dbReference type="GO" id="GO:0030488">
    <property type="term" value="P:tRNA methylation"/>
    <property type="evidence" value="ECO:0007669"/>
    <property type="project" value="TreeGrafter"/>
</dbReference>
<dbReference type="GO" id="GO:0002098">
    <property type="term" value="P:tRNA wobble uridine modification"/>
    <property type="evidence" value="ECO:0007669"/>
    <property type="project" value="InterPro"/>
</dbReference>
<dbReference type="FunFam" id="1.10.150.570:FF:000001">
    <property type="entry name" value="tRNA uridine 5-carboxymethylaminomethyl modification enzyme MnmG"/>
    <property type="match status" value="1"/>
</dbReference>
<dbReference type="FunFam" id="3.50.50.60:FF:000002">
    <property type="entry name" value="tRNA uridine 5-carboxymethylaminomethyl modification enzyme MnmG"/>
    <property type="match status" value="1"/>
</dbReference>
<dbReference type="Gene3D" id="3.50.50.60">
    <property type="entry name" value="FAD/NAD(P)-binding domain"/>
    <property type="match status" value="2"/>
</dbReference>
<dbReference type="Gene3D" id="1.10.150.570">
    <property type="entry name" value="GidA associated domain, C-terminal subdomain"/>
    <property type="match status" value="1"/>
</dbReference>
<dbReference type="Gene3D" id="1.10.10.1800">
    <property type="entry name" value="tRNA uridine 5-carboxymethylaminomethyl modification enzyme MnmG/GidA"/>
    <property type="match status" value="1"/>
</dbReference>
<dbReference type="HAMAP" id="MF_00129">
    <property type="entry name" value="MnmG_GidA"/>
    <property type="match status" value="1"/>
</dbReference>
<dbReference type="InterPro" id="IPR036188">
    <property type="entry name" value="FAD/NAD-bd_sf"/>
</dbReference>
<dbReference type="InterPro" id="IPR049312">
    <property type="entry name" value="GIDA_C_N"/>
</dbReference>
<dbReference type="InterPro" id="IPR004416">
    <property type="entry name" value="MnmG"/>
</dbReference>
<dbReference type="InterPro" id="IPR002218">
    <property type="entry name" value="MnmG-rel"/>
</dbReference>
<dbReference type="InterPro" id="IPR020595">
    <property type="entry name" value="MnmG-rel_CS"/>
</dbReference>
<dbReference type="InterPro" id="IPR026904">
    <property type="entry name" value="MnmG_C"/>
</dbReference>
<dbReference type="InterPro" id="IPR047001">
    <property type="entry name" value="MnmG_C_subdom"/>
</dbReference>
<dbReference type="InterPro" id="IPR044920">
    <property type="entry name" value="MnmG_C_subdom_sf"/>
</dbReference>
<dbReference type="InterPro" id="IPR040131">
    <property type="entry name" value="MnmG_N"/>
</dbReference>
<dbReference type="NCBIfam" id="TIGR00136">
    <property type="entry name" value="mnmG_gidA"/>
    <property type="match status" value="1"/>
</dbReference>
<dbReference type="PANTHER" id="PTHR11806">
    <property type="entry name" value="GLUCOSE INHIBITED DIVISION PROTEIN A"/>
    <property type="match status" value="1"/>
</dbReference>
<dbReference type="PANTHER" id="PTHR11806:SF0">
    <property type="entry name" value="PROTEIN MTO1 HOMOLOG, MITOCHONDRIAL"/>
    <property type="match status" value="1"/>
</dbReference>
<dbReference type="Pfam" id="PF01134">
    <property type="entry name" value="GIDA"/>
    <property type="match status" value="1"/>
</dbReference>
<dbReference type="Pfam" id="PF21680">
    <property type="entry name" value="GIDA_C_1st"/>
    <property type="match status" value="1"/>
</dbReference>
<dbReference type="Pfam" id="PF13932">
    <property type="entry name" value="SAM_GIDA_C"/>
    <property type="match status" value="1"/>
</dbReference>
<dbReference type="PRINTS" id="PR00411">
    <property type="entry name" value="PNDRDTASEI"/>
</dbReference>
<dbReference type="SMART" id="SM01228">
    <property type="entry name" value="GIDA_assoc_3"/>
    <property type="match status" value="1"/>
</dbReference>
<dbReference type="SUPFAM" id="SSF51905">
    <property type="entry name" value="FAD/NAD(P)-binding domain"/>
    <property type="match status" value="1"/>
</dbReference>
<dbReference type="PROSITE" id="PS01280">
    <property type="entry name" value="GIDA_1"/>
    <property type="match status" value="1"/>
</dbReference>
<dbReference type="PROSITE" id="PS01281">
    <property type="entry name" value="GIDA_2"/>
    <property type="match status" value="1"/>
</dbReference>
<accession>B5Z9Y2</accession>
<reference key="1">
    <citation type="journal article" date="2009" name="J. Bacteriol.">
        <title>The complete genome sequence of Helicobacter pylori strain G27.</title>
        <authorList>
            <person name="Baltrus D.A."/>
            <person name="Amieva M.R."/>
            <person name="Covacci A."/>
            <person name="Lowe T.M."/>
            <person name="Merrell D.S."/>
            <person name="Ottemann K.M."/>
            <person name="Stein M."/>
            <person name="Salama N.R."/>
            <person name="Guillemin K."/>
        </authorList>
    </citation>
    <scope>NUCLEOTIDE SEQUENCE [LARGE SCALE GENOMIC DNA]</scope>
    <source>
        <strain>G27</strain>
    </source>
</reference>
<comment type="function">
    <text evidence="1">NAD-binding protein involved in the addition of a carboxymethylaminomethyl (cmnm) group at the wobble position (U34) of certain tRNAs, forming tRNA-cmnm(5)s(2)U34.</text>
</comment>
<comment type="cofactor">
    <cofactor evidence="1">
        <name>FAD</name>
        <dbReference type="ChEBI" id="CHEBI:57692"/>
    </cofactor>
</comment>
<comment type="subunit">
    <text evidence="1">Homodimer. Heterotetramer of two MnmE and two MnmG subunits.</text>
</comment>
<comment type="subcellular location">
    <subcellularLocation>
        <location evidence="1">Cytoplasm</location>
    </subcellularLocation>
</comment>
<comment type="similarity">
    <text evidence="1">Belongs to the MnmG family.</text>
</comment>
<feature type="chain" id="PRO_1000095653" description="tRNA uridine 5-carboxymethylaminomethyl modification enzyme MnmG">
    <location>
        <begin position="1"/>
        <end position="621"/>
    </location>
</feature>
<feature type="binding site" evidence="1">
    <location>
        <begin position="11"/>
        <end position="16"/>
    </location>
    <ligand>
        <name>FAD</name>
        <dbReference type="ChEBI" id="CHEBI:57692"/>
    </ligand>
</feature>
<feature type="binding site" evidence="1">
    <location>
        <begin position="270"/>
        <end position="284"/>
    </location>
    <ligand>
        <name>NAD(+)</name>
        <dbReference type="ChEBI" id="CHEBI:57540"/>
    </ligand>
</feature>
<proteinExistence type="inferred from homology"/>
<keyword id="KW-0963">Cytoplasm</keyword>
<keyword id="KW-0274">FAD</keyword>
<keyword id="KW-0285">Flavoprotein</keyword>
<keyword id="KW-0520">NAD</keyword>
<keyword id="KW-1185">Reference proteome</keyword>
<keyword id="KW-0819">tRNA processing</keyword>
<sequence length="621" mass="69580">MVKESDILVVGGGHAGIEASLVAAKMGARVHLITMLIDTIGLASCNPAIGGLGKGHLTKEVDVLGGAMGIITDNSGLQYRVLNASKGPAVRGTRAQIDMDTYRIFARNLVLSTPNLSVSQEMTESLIIKNDEVVGVTTNINNTYKAKKVIITTGTFLKGVVHIGEHQNQNGRFGENASNSLALNLRELGFKVDRLKTGTCPRVAGNSIDFEGLEEHFGDTNPPYFSYKTKDFNPTQLSCFITYTNPITHQIIRDNFHRAPLFSGQIEGIGPRYCPSIEDKINRFSEKERHQLFLEPQTIHKSEYYINGLSTSLPLDVQEKVIHSIKGLENALITRYGYAIEYDFIQPTELTHTLETKKIKGLYLAGQINGTTGYEEAAAQGLMAGINAVLALKNQAPFILKRNEAYIGVLIDDLITKGTNEPYRMFTSRAEYRLLLREDNTLFRLGEHAYRLGLMEQDFYKELEKDKQAIQENLKRLKECVLTPSKEVLKRLNELDENPINDKMDGVSLLARDSFNIEKMRSFFSFLAPLNERVLEQIKIECKYNIYIEKQHENIAKMDSMLKVSIPKGFVFKGIPGLSLEAVEKLEKFRPKSLFEASEISGITPANLDVLHLYIHLRKNS</sequence>